<accession>Q5RC26</accession>
<evidence type="ECO:0000250" key="1">
    <source>
        <dbReference type="UniProtKB" id="Q9UBX5"/>
    </source>
</evidence>
<evidence type="ECO:0000250" key="2">
    <source>
        <dbReference type="UniProtKB" id="Q9WVH9"/>
    </source>
</evidence>
<evidence type="ECO:0000255" key="3"/>
<evidence type="ECO:0000255" key="4">
    <source>
        <dbReference type="PROSITE-ProRule" id="PRU00076"/>
    </source>
</evidence>
<evidence type="ECO:0000305" key="5"/>
<keyword id="KW-0106">Calcium</keyword>
<keyword id="KW-0130">Cell adhesion</keyword>
<keyword id="KW-1015">Disulfide bond</keyword>
<keyword id="KW-0245">EGF-like domain</keyword>
<keyword id="KW-0272">Extracellular matrix</keyword>
<keyword id="KW-0325">Glycoprotein</keyword>
<keyword id="KW-1185">Reference proteome</keyword>
<keyword id="KW-0677">Repeat</keyword>
<keyword id="KW-0964">Secreted</keyword>
<keyword id="KW-0732">Signal</keyword>
<gene>
    <name type="primary">FBLN5</name>
</gene>
<sequence length="448" mass="50280">MPGIKRILTVTILALCLPSPGNAQAQCTNGFDLDRQSGQCLDIDECRTIPEACRGDMMCVNQNGRYLCIPRTNPVYRGPYSNPYSTPYSGPYPAAAPPLSAPNYPTISRPLICRFGYQMDESNQCVDVDECATDSHQCNPTQICINTEGGYTCSCTDGYWLLEGQCLDIDECRYGYCQQLCANVPGSYSCTCNPGFTLNEDGRSCQDVNECATENPCVQTCVNTYGSFICRCDPGYELEEDGVHCSDMDECSFSEFLCQHECVNQPGTYFCSCPPGYILLDDNRSCQDINECEHRNHTCNLQQTCYNLQGGFKCIDPIRCEEPYLRISDNRCMCPAENPGCRDQPFTILYRDMDVVSGRSVPADIFQMQATTRYPGAYYIFQIKSGNEGREFYMRQTGPISATLVMTRPIKGPREIQLDLEMITVNTVINFRGSSVIRLRIYVSQYPF</sequence>
<comment type="function">
    <text evidence="1 2">Essential for elastic fiber formation, is involved in the assembly of continuous elastin (ELN) polymer and promotes the interaction of microfibrils and ELN. Stabilizes and organizes elastic fibers in the skin, lung and vasculature. Promotes adhesion of endothelial cells through interaction of integrins and the RGD motif. Vascular ligand for integrin receptors which may play a role in vascular development and remodeling. May act as an adapter that mediates the interaction between FBN1 and ELN.</text>
</comment>
<comment type="subunit">
    <text evidence="1 2">Homodimer. Monomer, homodimerizes in presence of Ca(2+). Interacts with ELN. Interacts (via N-terminus) with the integrins ITGAV/ITGB3, ITGAV/ITGB5 and ITGA9/ITGB1. Interacts with FBN1 (via N-terminal domain). Forms a ternary complex with ELN and FBN1. Interacts with EFEMP2 with moderate affinity (By similarity). Interacts with LOXL1 (By similarity).</text>
</comment>
<comment type="subcellular location">
    <subcellularLocation>
        <location evidence="1">Secreted</location>
    </subcellularLocation>
    <subcellularLocation>
        <location evidence="1">Secreted</location>
        <location evidence="1">Extracellular space</location>
        <location evidence="1">Extracellular matrix</location>
    </subcellularLocation>
    <text evidence="1">co-localizes with ELN in elastic fibers.</text>
</comment>
<comment type="PTM">
    <text evidence="1">N-glycosylated.</text>
</comment>
<comment type="similarity">
    <text evidence="5">Belongs to the fibulin family.</text>
</comment>
<dbReference type="EMBL" id="CR858456">
    <property type="protein sequence ID" value="CAH90684.1"/>
    <property type="molecule type" value="mRNA"/>
</dbReference>
<dbReference type="RefSeq" id="NP_001125375.1">
    <property type="nucleotide sequence ID" value="NM_001131903.1"/>
</dbReference>
<dbReference type="STRING" id="9601.ENSPPYP00000006903"/>
<dbReference type="GlyCosmos" id="Q5RC26">
    <property type="glycosylation" value="2 sites, No reported glycans"/>
</dbReference>
<dbReference type="GeneID" id="100172278"/>
<dbReference type="KEGG" id="pon:100172278"/>
<dbReference type="CTD" id="10516"/>
<dbReference type="eggNOG" id="KOG1217">
    <property type="taxonomic scope" value="Eukaryota"/>
</dbReference>
<dbReference type="InParanoid" id="Q5RC26"/>
<dbReference type="OrthoDB" id="4062651at2759"/>
<dbReference type="Proteomes" id="UP000001595">
    <property type="component" value="Unplaced"/>
</dbReference>
<dbReference type="GO" id="GO:0062023">
    <property type="term" value="C:collagen-containing extracellular matrix"/>
    <property type="evidence" value="ECO:0000250"/>
    <property type="project" value="UniProtKB"/>
</dbReference>
<dbReference type="GO" id="GO:0005615">
    <property type="term" value="C:extracellular space"/>
    <property type="evidence" value="ECO:0000250"/>
    <property type="project" value="UniProtKB"/>
</dbReference>
<dbReference type="GO" id="GO:0005509">
    <property type="term" value="F:calcium ion binding"/>
    <property type="evidence" value="ECO:0007669"/>
    <property type="project" value="InterPro"/>
</dbReference>
<dbReference type="GO" id="GO:0005178">
    <property type="term" value="F:integrin binding"/>
    <property type="evidence" value="ECO:0000250"/>
    <property type="project" value="UniProtKB"/>
</dbReference>
<dbReference type="GO" id="GO:0042803">
    <property type="term" value="F:protein homodimerization activity"/>
    <property type="evidence" value="ECO:0000250"/>
    <property type="project" value="UniProtKB"/>
</dbReference>
<dbReference type="GO" id="GO:0007155">
    <property type="term" value="P:cell adhesion"/>
    <property type="evidence" value="ECO:0007669"/>
    <property type="project" value="UniProtKB-KW"/>
</dbReference>
<dbReference type="GO" id="GO:0048251">
    <property type="term" value="P:elastic fiber assembly"/>
    <property type="evidence" value="ECO:0000250"/>
    <property type="project" value="UniProtKB"/>
</dbReference>
<dbReference type="CDD" id="cd00054">
    <property type="entry name" value="EGF_CA"/>
    <property type="match status" value="1"/>
</dbReference>
<dbReference type="FunFam" id="2.10.25.10:FF:000367">
    <property type="entry name" value="EGF-containing fibulin-like extracellular matrix protein 2"/>
    <property type="match status" value="1"/>
</dbReference>
<dbReference type="FunFam" id="2.10.25.10:FF:000091">
    <property type="entry name" value="Fibulin 5"/>
    <property type="match status" value="2"/>
</dbReference>
<dbReference type="FunFam" id="2.10.25.10:FF:000487">
    <property type="entry name" value="Fibulin 5"/>
    <property type="match status" value="1"/>
</dbReference>
<dbReference type="FunFam" id="2.10.25.10:FF:000190">
    <property type="entry name" value="fibulin-5 isoform X2"/>
    <property type="match status" value="1"/>
</dbReference>
<dbReference type="Gene3D" id="2.10.25.10">
    <property type="entry name" value="Laminin"/>
    <property type="match status" value="7"/>
</dbReference>
<dbReference type="InterPro" id="IPR026823">
    <property type="entry name" value="cEGF"/>
</dbReference>
<dbReference type="InterPro" id="IPR001881">
    <property type="entry name" value="EGF-like_Ca-bd_dom"/>
</dbReference>
<dbReference type="InterPro" id="IPR000742">
    <property type="entry name" value="EGF-like_dom"/>
</dbReference>
<dbReference type="InterPro" id="IPR000152">
    <property type="entry name" value="EGF-type_Asp/Asn_hydroxyl_site"/>
</dbReference>
<dbReference type="InterPro" id="IPR018097">
    <property type="entry name" value="EGF_Ca-bd_CS"/>
</dbReference>
<dbReference type="InterPro" id="IPR055088">
    <property type="entry name" value="Fibulin_C"/>
</dbReference>
<dbReference type="InterPro" id="IPR009030">
    <property type="entry name" value="Growth_fac_rcpt_cys_sf"/>
</dbReference>
<dbReference type="InterPro" id="IPR052235">
    <property type="entry name" value="Nephronectin_domain"/>
</dbReference>
<dbReference type="InterPro" id="IPR049883">
    <property type="entry name" value="NOTCH1_EGF-like"/>
</dbReference>
<dbReference type="PANTHER" id="PTHR24050">
    <property type="entry name" value="PA14 DOMAIN-CONTAINING PROTEIN"/>
    <property type="match status" value="1"/>
</dbReference>
<dbReference type="PANTHER" id="PTHR24050:SF28">
    <property type="entry name" value="UROMODULIN-LIKE"/>
    <property type="match status" value="1"/>
</dbReference>
<dbReference type="Pfam" id="PF12662">
    <property type="entry name" value="cEGF"/>
    <property type="match status" value="3"/>
</dbReference>
<dbReference type="Pfam" id="PF07645">
    <property type="entry name" value="EGF_CA"/>
    <property type="match status" value="2"/>
</dbReference>
<dbReference type="Pfam" id="PF22914">
    <property type="entry name" value="Fibulin_C"/>
    <property type="match status" value="1"/>
</dbReference>
<dbReference type="SMART" id="SM00181">
    <property type="entry name" value="EGF"/>
    <property type="match status" value="5"/>
</dbReference>
<dbReference type="SMART" id="SM00179">
    <property type="entry name" value="EGF_CA"/>
    <property type="match status" value="6"/>
</dbReference>
<dbReference type="SUPFAM" id="SSF57196">
    <property type="entry name" value="EGF/Laminin"/>
    <property type="match status" value="1"/>
</dbReference>
<dbReference type="SUPFAM" id="SSF57184">
    <property type="entry name" value="Growth factor receptor domain"/>
    <property type="match status" value="2"/>
</dbReference>
<dbReference type="PROSITE" id="PS00010">
    <property type="entry name" value="ASX_HYDROXYL"/>
    <property type="match status" value="4"/>
</dbReference>
<dbReference type="PROSITE" id="PS01186">
    <property type="entry name" value="EGF_2"/>
    <property type="match status" value="4"/>
</dbReference>
<dbReference type="PROSITE" id="PS50026">
    <property type="entry name" value="EGF_3"/>
    <property type="match status" value="5"/>
</dbReference>
<dbReference type="PROSITE" id="PS01187">
    <property type="entry name" value="EGF_CA"/>
    <property type="match status" value="6"/>
</dbReference>
<proteinExistence type="evidence at transcript level"/>
<organism>
    <name type="scientific">Pongo abelii</name>
    <name type="common">Sumatran orangutan</name>
    <name type="synonym">Pongo pygmaeus abelii</name>
    <dbReference type="NCBI Taxonomy" id="9601"/>
    <lineage>
        <taxon>Eukaryota</taxon>
        <taxon>Metazoa</taxon>
        <taxon>Chordata</taxon>
        <taxon>Craniata</taxon>
        <taxon>Vertebrata</taxon>
        <taxon>Euteleostomi</taxon>
        <taxon>Mammalia</taxon>
        <taxon>Eutheria</taxon>
        <taxon>Euarchontoglires</taxon>
        <taxon>Primates</taxon>
        <taxon>Haplorrhini</taxon>
        <taxon>Catarrhini</taxon>
        <taxon>Hominidae</taxon>
        <taxon>Pongo</taxon>
    </lineage>
</organism>
<name>FBLN5_PONAB</name>
<feature type="signal peptide" evidence="3">
    <location>
        <begin position="1"/>
        <end position="23"/>
    </location>
</feature>
<feature type="chain" id="PRO_0000317126" description="Fibulin-5">
    <location>
        <begin position="24"/>
        <end position="448"/>
    </location>
</feature>
<feature type="domain" description="EGF-like 1; calcium-binding" evidence="4">
    <location>
        <begin position="42"/>
        <end position="82"/>
    </location>
</feature>
<feature type="domain" description="EGF-like 2; calcium-binding" evidence="4">
    <location>
        <begin position="127"/>
        <end position="167"/>
    </location>
</feature>
<feature type="domain" description="EGF-like 3; calcium-binding" evidence="4">
    <location>
        <begin position="168"/>
        <end position="206"/>
    </location>
</feature>
<feature type="domain" description="EGF-like 4; calcium-binding" evidence="4">
    <location>
        <begin position="207"/>
        <end position="246"/>
    </location>
</feature>
<feature type="domain" description="EGF-like 5; calcium-binding" evidence="4">
    <location>
        <begin position="247"/>
        <end position="287"/>
    </location>
</feature>
<feature type="domain" description="EGF-like 6; calcium-binding" evidence="4">
    <location>
        <begin position="288"/>
        <end position="333"/>
    </location>
</feature>
<feature type="region of interest" description="Interaction with LOXL1" evidence="2">
    <location>
        <begin position="245"/>
        <end position="448"/>
    </location>
</feature>
<feature type="short sequence motif" description="Cell attachment site" evidence="3">
    <location>
        <begin position="54"/>
        <end position="56"/>
    </location>
</feature>
<feature type="glycosylation site" description="N-linked (GlcNAc...) asparagine" evidence="3">
    <location>
        <position position="283"/>
    </location>
</feature>
<feature type="glycosylation site" description="N-linked (GlcNAc...) asparagine" evidence="3">
    <location>
        <position position="296"/>
    </location>
</feature>
<feature type="disulfide bond" evidence="4">
    <location>
        <begin position="46"/>
        <end position="59"/>
    </location>
</feature>
<feature type="disulfide bond" evidence="4">
    <location>
        <begin position="53"/>
        <end position="68"/>
    </location>
</feature>
<feature type="disulfide bond" evidence="4">
    <location>
        <begin position="131"/>
        <end position="144"/>
    </location>
</feature>
<feature type="disulfide bond" evidence="4">
    <location>
        <begin position="138"/>
        <end position="153"/>
    </location>
</feature>
<feature type="disulfide bond" evidence="4">
    <location>
        <begin position="155"/>
        <end position="166"/>
    </location>
</feature>
<feature type="disulfide bond" evidence="4">
    <location>
        <begin position="172"/>
        <end position="181"/>
    </location>
</feature>
<feature type="disulfide bond" evidence="4">
    <location>
        <begin position="177"/>
        <end position="190"/>
    </location>
</feature>
<feature type="disulfide bond" evidence="4">
    <location>
        <begin position="192"/>
        <end position="205"/>
    </location>
</feature>
<feature type="disulfide bond" evidence="4">
    <location>
        <begin position="211"/>
        <end position="221"/>
    </location>
</feature>
<feature type="disulfide bond" evidence="4">
    <location>
        <begin position="217"/>
        <end position="230"/>
    </location>
</feature>
<feature type="disulfide bond" evidence="4">
    <location>
        <begin position="232"/>
        <end position="245"/>
    </location>
</feature>
<feature type="disulfide bond" evidence="4">
    <location>
        <begin position="251"/>
        <end position="262"/>
    </location>
</feature>
<feature type="disulfide bond" evidence="4">
    <location>
        <begin position="258"/>
        <end position="271"/>
    </location>
</feature>
<feature type="disulfide bond" evidence="4">
    <location>
        <begin position="273"/>
        <end position="286"/>
    </location>
</feature>
<feature type="disulfide bond" evidence="4">
    <location>
        <begin position="292"/>
        <end position="305"/>
    </location>
</feature>
<feature type="disulfide bond" evidence="4">
    <location>
        <begin position="299"/>
        <end position="314"/>
    </location>
</feature>
<feature type="disulfide bond" evidence="4">
    <location>
        <begin position="320"/>
        <end position="332"/>
    </location>
</feature>
<protein>
    <recommendedName>
        <fullName>Fibulin-5</fullName>
        <shortName>FIBL-5</shortName>
    </recommendedName>
</protein>
<reference key="1">
    <citation type="submission" date="2004-11" db="EMBL/GenBank/DDBJ databases">
        <authorList>
            <consortium name="The German cDNA consortium"/>
        </authorList>
    </citation>
    <scope>NUCLEOTIDE SEQUENCE [LARGE SCALE MRNA]</scope>
    <source>
        <tissue>Kidney</tissue>
    </source>
</reference>